<keyword id="KW-0687">Ribonucleoprotein</keyword>
<keyword id="KW-0689">Ribosomal protein</keyword>
<keyword id="KW-0694">RNA-binding</keyword>
<keyword id="KW-0699">rRNA-binding</keyword>
<reference key="1">
    <citation type="journal article" date="2003" name="Genome Res.">
        <title>Genome sequence of an M3 strain of Streptococcus pyogenes reveals a large-scale genomic rearrangement in invasive strains and new insights into phage evolution.</title>
        <authorList>
            <person name="Nakagawa I."/>
            <person name="Kurokawa K."/>
            <person name="Yamashita A."/>
            <person name="Nakata M."/>
            <person name="Tomiyasu Y."/>
            <person name="Okahashi N."/>
            <person name="Kawabata S."/>
            <person name="Yamazaki K."/>
            <person name="Shiba T."/>
            <person name="Yasunaga T."/>
            <person name="Hayashi H."/>
            <person name="Hattori M."/>
            <person name="Hamada S."/>
        </authorList>
    </citation>
    <scope>NUCLEOTIDE SEQUENCE [LARGE SCALE GENOMIC DNA]</scope>
    <source>
        <strain>SSI-1</strain>
    </source>
</reference>
<dbReference type="EMBL" id="BA000034">
    <property type="protein sequence ID" value="BAC63143.1"/>
    <property type="status" value="ALT_INIT"/>
    <property type="molecule type" value="Genomic_DNA"/>
</dbReference>
<dbReference type="RefSeq" id="WP_000529929.1">
    <property type="nucleotide sequence ID" value="NC_004606.1"/>
</dbReference>
<dbReference type="SMR" id="P0DE91"/>
<dbReference type="GeneID" id="69900032"/>
<dbReference type="KEGG" id="sps:SPs0048"/>
<dbReference type="HOGENOM" id="CLU_058591_0_2_9"/>
<dbReference type="GO" id="GO:0022627">
    <property type="term" value="C:cytosolic small ribosomal subunit"/>
    <property type="evidence" value="ECO:0007669"/>
    <property type="project" value="TreeGrafter"/>
</dbReference>
<dbReference type="GO" id="GO:0003729">
    <property type="term" value="F:mRNA binding"/>
    <property type="evidence" value="ECO:0007669"/>
    <property type="project" value="UniProtKB-UniRule"/>
</dbReference>
<dbReference type="GO" id="GO:0019843">
    <property type="term" value="F:rRNA binding"/>
    <property type="evidence" value="ECO:0007669"/>
    <property type="project" value="UniProtKB-UniRule"/>
</dbReference>
<dbReference type="GO" id="GO:0003735">
    <property type="term" value="F:structural constituent of ribosome"/>
    <property type="evidence" value="ECO:0007669"/>
    <property type="project" value="InterPro"/>
</dbReference>
<dbReference type="GO" id="GO:0006412">
    <property type="term" value="P:translation"/>
    <property type="evidence" value="ECO:0007669"/>
    <property type="project" value="UniProtKB-UniRule"/>
</dbReference>
<dbReference type="CDD" id="cd02412">
    <property type="entry name" value="KH-II_30S_S3"/>
    <property type="match status" value="1"/>
</dbReference>
<dbReference type="FunFam" id="3.30.1140.32:FF:000001">
    <property type="entry name" value="30S ribosomal protein S3"/>
    <property type="match status" value="1"/>
</dbReference>
<dbReference type="FunFam" id="3.30.300.20:FF:000001">
    <property type="entry name" value="30S ribosomal protein S3"/>
    <property type="match status" value="1"/>
</dbReference>
<dbReference type="Gene3D" id="3.30.300.20">
    <property type="match status" value="1"/>
</dbReference>
<dbReference type="Gene3D" id="3.30.1140.32">
    <property type="entry name" value="Ribosomal protein S3, C-terminal domain"/>
    <property type="match status" value="1"/>
</dbReference>
<dbReference type="HAMAP" id="MF_01309_B">
    <property type="entry name" value="Ribosomal_uS3_B"/>
    <property type="match status" value="1"/>
</dbReference>
<dbReference type="InterPro" id="IPR004087">
    <property type="entry name" value="KH_dom"/>
</dbReference>
<dbReference type="InterPro" id="IPR015946">
    <property type="entry name" value="KH_dom-like_a/b"/>
</dbReference>
<dbReference type="InterPro" id="IPR004044">
    <property type="entry name" value="KH_dom_type_2"/>
</dbReference>
<dbReference type="InterPro" id="IPR009019">
    <property type="entry name" value="KH_sf_prok-type"/>
</dbReference>
<dbReference type="InterPro" id="IPR036419">
    <property type="entry name" value="Ribosomal_S3_C_sf"/>
</dbReference>
<dbReference type="InterPro" id="IPR005704">
    <property type="entry name" value="Ribosomal_uS3_bac-typ"/>
</dbReference>
<dbReference type="InterPro" id="IPR001351">
    <property type="entry name" value="Ribosomal_uS3_C"/>
</dbReference>
<dbReference type="InterPro" id="IPR018280">
    <property type="entry name" value="Ribosomal_uS3_CS"/>
</dbReference>
<dbReference type="NCBIfam" id="TIGR01009">
    <property type="entry name" value="rpsC_bact"/>
    <property type="match status" value="1"/>
</dbReference>
<dbReference type="PANTHER" id="PTHR11760">
    <property type="entry name" value="30S/40S RIBOSOMAL PROTEIN S3"/>
    <property type="match status" value="1"/>
</dbReference>
<dbReference type="PANTHER" id="PTHR11760:SF19">
    <property type="entry name" value="SMALL RIBOSOMAL SUBUNIT PROTEIN US3C"/>
    <property type="match status" value="1"/>
</dbReference>
<dbReference type="Pfam" id="PF07650">
    <property type="entry name" value="KH_2"/>
    <property type="match status" value="1"/>
</dbReference>
<dbReference type="Pfam" id="PF00189">
    <property type="entry name" value="Ribosomal_S3_C"/>
    <property type="match status" value="1"/>
</dbReference>
<dbReference type="SMART" id="SM00322">
    <property type="entry name" value="KH"/>
    <property type="match status" value="1"/>
</dbReference>
<dbReference type="SUPFAM" id="SSF54814">
    <property type="entry name" value="Prokaryotic type KH domain (KH-domain type II)"/>
    <property type="match status" value="1"/>
</dbReference>
<dbReference type="SUPFAM" id="SSF54821">
    <property type="entry name" value="Ribosomal protein S3 C-terminal domain"/>
    <property type="match status" value="1"/>
</dbReference>
<dbReference type="PROSITE" id="PS50823">
    <property type="entry name" value="KH_TYPE_2"/>
    <property type="match status" value="1"/>
</dbReference>
<dbReference type="PROSITE" id="PS00548">
    <property type="entry name" value="RIBOSOMAL_S3"/>
    <property type="match status" value="1"/>
</dbReference>
<evidence type="ECO:0000255" key="1">
    <source>
        <dbReference type="HAMAP-Rule" id="MF_01309"/>
    </source>
</evidence>
<evidence type="ECO:0000305" key="2"/>
<proteinExistence type="inferred from homology"/>
<comment type="function">
    <text evidence="1">Binds the lower part of the 30S subunit head. Binds mRNA in the 70S ribosome, positioning it for translation.</text>
</comment>
<comment type="subunit">
    <text evidence="1">Part of the 30S ribosomal subunit. Forms a tight complex with proteins S10 and S14.</text>
</comment>
<comment type="similarity">
    <text evidence="1">Belongs to the universal ribosomal protein uS3 family.</text>
</comment>
<comment type="sequence caution" evidence="2">
    <conflict type="erroneous initiation">
        <sequence resource="EMBL-CDS" id="BAC63143"/>
    </conflict>
</comment>
<organism>
    <name type="scientific">Streptococcus pyogenes serotype M3 (strain SSI-1)</name>
    <dbReference type="NCBI Taxonomy" id="193567"/>
    <lineage>
        <taxon>Bacteria</taxon>
        <taxon>Bacillati</taxon>
        <taxon>Bacillota</taxon>
        <taxon>Bacilli</taxon>
        <taxon>Lactobacillales</taxon>
        <taxon>Streptococcaceae</taxon>
        <taxon>Streptococcus</taxon>
    </lineage>
</organism>
<protein>
    <recommendedName>
        <fullName evidence="1">Small ribosomal subunit protein uS3</fullName>
    </recommendedName>
    <alternativeName>
        <fullName evidence="2">30S ribosomal protein S3</fullName>
    </alternativeName>
</protein>
<accession>P0DE91</accession>
<accession>P59185</accession>
<accession>P66556</accession>
<accession>Q8K8X2</accession>
<accession>Q9A1W8</accession>
<gene>
    <name evidence="1" type="primary">rpsC</name>
    <name type="ordered locus">SPs0048</name>
</gene>
<feature type="chain" id="PRO_0000411535" description="Small ribosomal subunit protein uS3">
    <location>
        <begin position="1"/>
        <end position="217"/>
    </location>
</feature>
<feature type="domain" description="KH type-2" evidence="1">
    <location>
        <begin position="38"/>
        <end position="106"/>
    </location>
</feature>
<name>RS3_STRPQ</name>
<sequence>MGQKVHPIGMRVGIIRDWDAKWYAEKEYADYLHEDLAIRKFINKELADASVSTIEIERAVNKVIVSLHTAKPGMVIGKGGANVDALRGQLNKLTGKQVHINIIEIKQPDLDAHLVGENIARQLEQRVAFRRAQKQAIQRTMRAGAKGIKTQVSGRLNGADIARAEGYSEGTVPLHTLRADIDYAWEEADTTYGKLGVKVWIYRGEVLPARKNTKGGK</sequence>